<reference key="1">
    <citation type="journal article" date="2005" name="Proc. Natl. Acad. Sci. U.S.A.">
        <title>Whole genome sequence of Staphylococcus saprophyticus reveals the pathogenesis of uncomplicated urinary tract infection.</title>
        <authorList>
            <person name="Kuroda M."/>
            <person name="Yamashita A."/>
            <person name="Hirakawa H."/>
            <person name="Kumano M."/>
            <person name="Morikawa K."/>
            <person name="Higashide M."/>
            <person name="Maruyama A."/>
            <person name="Inose Y."/>
            <person name="Matoba K."/>
            <person name="Toh H."/>
            <person name="Kuhara S."/>
            <person name="Hattori M."/>
            <person name="Ohta T."/>
        </authorList>
    </citation>
    <scope>NUCLEOTIDE SEQUENCE [LARGE SCALE GENOMIC DNA]</scope>
    <source>
        <strain>ATCC 15305 / DSM 20229 / NCIMB 8711 / NCTC 7292 / S-41</strain>
    </source>
</reference>
<name>ECFA2_STAS1</name>
<organism>
    <name type="scientific">Staphylococcus saprophyticus subsp. saprophyticus (strain ATCC 15305 / DSM 20229 / NCIMB 8711 / NCTC 7292 / S-41)</name>
    <dbReference type="NCBI Taxonomy" id="342451"/>
    <lineage>
        <taxon>Bacteria</taxon>
        <taxon>Bacillati</taxon>
        <taxon>Bacillota</taxon>
        <taxon>Bacilli</taxon>
        <taxon>Bacillales</taxon>
        <taxon>Staphylococcaceae</taxon>
        <taxon>Staphylococcus</taxon>
    </lineage>
</organism>
<protein>
    <recommendedName>
        <fullName evidence="1">Energy-coupling factor transporter ATP-binding protein EcfA2</fullName>
        <shortName evidence="1">ECF transporter A component EcfA2</shortName>
        <ecNumber evidence="1">7.-.-.-</ecNumber>
    </recommendedName>
</protein>
<comment type="function">
    <text evidence="1">ATP-binding (A) component of a common energy-coupling factor (ECF) ABC-transporter complex. Unlike classic ABC transporters this ECF transporter provides the energy necessary to transport a number of different substrates.</text>
</comment>
<comment type="subunit">
    <text evidence="1">Forms a stable energy-coupling factor (ECF) transporter complex composed of 2 membrane-embedded substrate-binding proteins (S component), 2 ATP-binding proteins (A component) and 2 transmembrane proteins (T component).</text>
</comment>
<comment type="subcellular location">
    <subcellularLocation>
        <location evidence="1">Cell membrane</location>
        <topology evidence="1">Peripheral membrane protein</topology>
    </subcellularLocation>
</comment>
<comment type="similarity">
    <text evidence="1">Belongs to the ABC transporter superfamily. Energy-coupling factor EcfA family.</text>
</comment>
<proteinExistence type="inferred from homology"/>
<evidence type="ECO:0000255" key="1">
    <source>
        <dbReference type="HAMAP-Rule" id="MF_01710"/>
    </source>
</evidence>
<gene>
    <name evidence="1" type="primary">ecfA2</name>
    <name type="synonym">cbiO2</name>
    <name type="ordered locus">SSP0692</name>
</gene>
<feature type="chain" id="PRO_0000287990" description="Energy-coupling factor transporter ATP-binding protein EcfA2">
    <location>
        <begin position="1"/>
        <end position="287"/>
    </location>
</feature>
<feature type="domain" description="ABC transporter" evidence="1">
    <location>
        <begin position="3"/>
        <end position="246"/>
    </location>
</feature>
<feature type="binding site" evidence="1">
    <location>
        <begin position="40"/>
        <end position="47"/>
    </location>
    <ligand>
        <name>ATP</name>
        <dbReference type="ChEBI" id="CHEBI:30616"/>
    </ligand>
</feature>
<sequence>MTVKFSQVSYVYQKGTPFEHVALRDIETTFQQGKYYAVIGQTGSGKSTLIQHFNGLLKPSTGKLQIDDITITHKTKDKVLKQIRKRIGVVFQFPESQLFEDSVEREILFGPKNFNMPIDEVKARAYKLLIDFGFSRDILQQSPFQMSGGQMRKIAITSILAMDPDIVILDEPTAGLDPKSRDQIMKMIKKLQVEQNKTIILVTHEMNDVAKYVDEIKIMKQGQLVEECSPRKLFSDTNYVNQLHLDVPDVVKLQRDIEDKYQYYFNKIALTEDEFIDMYKEWQEDER</sequence>
<dbReference type="EC" id="7.-.-.-" evidence="1"/>
<dbReference type="EMBL" id="AP008934">
    <property type="protein sequence ID" value="BAE17837.1"/>
    <property type="molecule type" value="Genomic_DNA"/>
</dbReference>
<dbReference type="RefSeq" id="WP_011302608.1">
    <property type="nucleotide sequence ID" value="NZ_MTGA01000036.1"/>
</dbReference>
<dbReference type="SMR" id="Q49ZD9"/>
<dbReference type="GeneID" id="3615991"/>
<dbReference type="KEGG" id="ssp:SSP0692"/>
<dbReference type="PATRIC" id="fig|342451.11.peg.694"/>
<dbReference type="eggNOG" id="COG1122">
    <property type="taxonomic scope" value="Bacteria"/>
</dbReference>
<dbReference type="HOGENOM" id="CLU_000604_1_22_9"/>
<dbReference type="OrthoDB" id="9784332at2"/>
<dbReference type="Proteomes" id="UP000006371">
    <property type="component" value="Chromosome"/>
</dbReference>
<dbReference type="GO" id="GO:0043190">
    <property type="term" value="C:ATP-binding cassette (ABC) transporter complex"/>
    <property type="evidence" value="ECO:0007669"/>
    <property type="project" value="TreeGrafter"/>
</dbReference>
<dbReference type="GO" id="GO:0005524">
    <property type="term" value="F:ATP binding"/>
    <property type="evidence" value="ECO:0007669"/>
    <property type="project" value="UniProtKB-KW"/>
</dbReference>
<dbReference type="GO" id="GO:0016887">
    <property type="term" value="F:ATP hydrolysis activity"/>
    <property type="evidence" value="ECO:0007669"/>
    <property type="project" value="InterPro"/>
</dbReference>
<dbReference type="GO" id="GO:0042626">
    <property type="term" value="F:ATPase-coupled transmembrane transporter activity"/>
    <property type="evidence" value="ECO:0007669"/>
    <property type="project" value="TreeGrafter"/>
</dbReference>
<dbReference type="CDD" id="cd03225">
    <property type="entry name" value="ABC_cobalt_CbiO_domain1"/>
    <property type="match status" value="1"/>
</dbReference>
<dbReference type="FunFam" id="3.40.50.300:FF:000224">
    <property type="entry name" value="Energy-coupling factor transporter ATP-binding protein EcfA"/>
    <property type="match status" value="1"/>
</dbReference>
<dbReference type="Gene3D" id="3.40.50.300">
    <property type="entry name" value="P-loop containing nucleotide triphosphate hydrolases"/>
    <property type="match status" value="1"/>
</dbReference>
<dbReference type="InterPro" id="IPR003593">
    <property type="entry name" value="AAA+_ATPase"/>
</dbReference>
<dbReference type="InterPro" id="IPR003439">
    <property type="entry name" value="ABC_transporter-like_ATP-bd"/>
</dbReference>
<dbReference type="InterPro" id="IPR015856">
    <property type="entry name" value="ABC_transpr_CbiO/EcfA_su"/>
</dbReference>
<dbReference type="InterPro" id="IPR050095">
    <property type="entry name" value="ECF_ABC_transporter_ATP-bd"/>
</dbReference>
<dbReference type="InterPro" id="IPR030946">
    <property type="entry name" value="EcfA2"/>
</dbReference>
<dbReference type="InterPro" id="IPR027417">
    <property type="entry name" value="P-loop_NTPase"/>
</dbReference>
<dbReference type="NCBIfam" id="TIGR04521">
    <property type="entry name" value="ECF_ATPase_2"/>
    <property type="match status" value="1"/>
</dbReference>
<dbReference type="NCBIfam" id="NF010166">
    <property type="entry name" value="PRK13646.1"/>
    <property type="match status" value="1"/>
</dbReference>
<dbReference type="PANTHER" id="PTHR43553:SF27">
    <property type="entry name" value="ENERGY-COUPLING FACTOR TRANSPORTER ATP-BINDING PROTEIN ECFA2"/>
    <property type="match status" value="1"/>
</dbReference>
<dbReference type="PANTHER" id="PTHR43553">
    <property type="entry name" value="HEAVY METAL TRANSPORTER"/>
    <property type="match status" value="1"/>
</dbReference>
<dbReference type="Pfam" id="PF00005">
    <property type="entry name" value="ABC_tran"/>
    <property type="match status" value="1"/>
</dbReference>
<dbReference type="SMART" id="SM00382">
    <property type="entry name" value="AAA"/>
    <property type="match status" value="1"/>
</dbReference>
<dbReference type="SUPFAM" id="SSF52540">
    <property type="entry name" value="P-loop containing nucleoside triphosphate hydrolases"/>
    <property type="match status" value="1"/>
</dbReference>
<dbReference type="PROSITE" id="PS50893">
    <property type="entry name" value="ABC_TRANSPORTER_2"/>
    <property type="match status" value="1"/>
</dbReference>
<dbReference type="PROSITE" id="PS51246">
    <property type="entry name" value="CBIO"/>
    <property type="match status" value="1"/>
</dbReference>
<keyword id="KW-0067">ATP-binding</keyword>
<keyword id="KW-1003">Cell membrane</keyword>
<keyword id="KW-0472">Membrane</keyword>
<keyword id="KW-0547">Nucleotide-binding</keyword>
<keyword id="KW-1185">Reference proteome</keyword>
<keyword id="KW-1278">Translocase</keyword>
<keyword id="KW-0813">Transport</keyword>
<accession>Q49ZD9</accession>